<reference key="1">
    <citation type="journal article" date="1985" name="FEBS Lett.">
        <title>Primary structure of porcine Cu,Zn superoxide dismutase.</title>
        <authorList>
            <person name="Schinina M.E."/>
            <person name="Barra D."/>
            <person name="Simmaco M."/>
            <person name="Bossa F."/>
            <person name="Rotilio G."/>
        </authorList>
    </citation>
    <scope>PROTEIN SEQUENCE OF 2-153</scope>
    <scope>ACETYLATION AT ALA-2</scope>
</reference>
<protein>
    <recommendedName>
        <fullName evidence="2">Superoxide dismutase [Cu-Zn]</fullName>
        <ecNumber evidence="2">1.15.1.1</ecNumber>
    </recommendedName>
</protein>
<evidence type="ECO:0000250" key="1"/>
<evidence type="ECO:0000250" key="2">
    <source>
        <dbReference type="UniProtKB" id="P00441"/>
    </source>
</evidence>
<evidence type="ECO:0000250" key="3">
    <source>
        <dbReference type="UniProtKB" id="P08228"/>
    </source>
</evidence>
<evidence type="ECO:0000256" key="4">
    <source>
        <dbReference type="SAM" id="MobiDB-lite"/>
    </source>
</evidence>
<evidence type="ECO:0000269" key="5">
    <source>
    </source>
</evidence>
<evidence type="ECO:0000305" key="6"/>
<gene>
    <name evidence="2" type="primary">SOD1</name>
</gene>
<sequence>MATKAVCVLKGDGPVQGTIYFELKGEKTVLVTGTIKGLAEGDHGFHVHQFGDNTQGCTSAGPHFNPESKKHGGPKDQERHVGDLGNVTAGKDGVATVYIEDSVIALSGDHSIIGRTMVVHEKPDDLGRGGNEESTKTGNAGSRLACGVIGITQ</sequence>
<dbReference type="EC" id="1.15.1.1" evidence="2"/>
<dbReference type="PIR" id="A00514">
    <property type="entry name" value="DSPGCZ"/>
</dbReference>
<dbReference type="RefSeq" id="NP_001177351.1">
    <property type="nucleotide sequence ID" value="NM_001190422.1"/>
</dbReference>
<dbReference type="SMR" id="P04178"/>
<dbReference type="FunCoup" id="P04178">
    <property type="interactions" value="1224"/>
</dbReference>
<dbReference type="STRING" id="9823.ENSSSCP00000026815"/>
<dbReference type="iPTMnet" id="P04178"/>
<dbReference type="PaxDb" id="9823-ENSSSCP00000026815"/>
<dbReference type="PeptideAtlas" id="P04178"/>
<dbReference type="Ensembl" id="ENSSSCT00025029544.1">
    <property type="protein sequence ID" value="ENSSSCP00025012561.1"/>
    <property type="gene ID" value="ENSSSCG00025021718.1"/>
</dbReference>
<dbReference type="Ensembl" id="ENSSSCT00035075531.1">
    <property type="protein sequence ID" value="ENSSSCP00035030755.1"/>
    <property type="gene ID" value="ENSSSCG00035056538.1"/>
</dbReference>
<dbReference type="Ensembl" id="ENSSSCT00045037084.1">
    <property type="protein sequence ID" value="ENSSSCP00045025801.1"/>
    <property type="gene ID" value="ENSSSCG00045021700.1"/>
</dbReference>
<dbReference type="Ensembl" id="ENSSSCT00050072256.1">
    <property type="protein sequence ID" value="ENSSSCP00050031075.1"/>
    <property type="gene ID" value="ENSSSCG00050053056.1"/>
</dbReference>
<dbReference type="Ensembl" id="ENSSSCT00055038009.1">
    <property type="protein sequence ID" value="ENSSSCP00055030202.1"/>
    <property type="gene ID" value="ENSSSCG00055019424.1"/>
</dbReference>
<dbReference type="Ensembl" id="ENSSSCT00065090983.1">
    <property type="protein sequence ID" value="ENSSSCP00065039821.1"/>
    <property type="gene ID" value="ENSSSCG00065066291.1"/>
</dbReference>
<dbReference type="Ensembl" id="ENSSSCT00070028574.1">
    <property type="protein sequence ID" value="ENSSSCP00070023804.1"/>
    <property type="gene ID" value="ENSSSCG00070014563.1"/>
</dbReference>
<dbReference type="Ensembl" id="ENSSSCT00115011159">
    <property type="protein sequence ID" value="ENSSSCP00115010518"/>
    <property type="gene ID" value="ENSSSCG00115006449"/>
</dbReference>
<dbReference type="GeneID" id="397036"/>
<dbReference type="KEGG" id="ssc:397036"/>
<dbReference type="CTD" id="6647"/>
<dbReference type="eggNOG" id="KOG0441">
    <property type="taxonomic scope" value="Eukaryota"/>
</dbReference>
<dbReference type="HOGENOM" id="CLU_056632_4_1_1"/>
<dbReference type="InParanoid" id="P04178"/>
<dbReference type="OrthoDB" id="2015551at2759"/>
<dbReference type="TreeFam" id="TF105131"/>
<dbReference type="Reactome" id="R-SSC-114608">
    <property type="pathway name" value="Platelet degranulation"/>
</dbReference>
<dbReference type="Reactome" id="R-SSC-3299685">
    <property type="pathway name" value="Detoxification of Reactive Oxygen Species"/>
</dbReference>
<dbReference type="Proteomes" id="UP000008227">
    <property type="component" value="Unplaced"/>
</dbReference>
<dbReference type="Proteomes" id="UP000314985">
    <property type="component" value="Chromosome 13"/>
</dbReference>
<dbReference type="Proteomes" id="UP000694570">
    <property type="component" value="Unplaced"/>
</dbReference>
<dbReference type="Proteomes" id="UP000694571">
    <property type="component" value="Unplaced"/>
</dbReference>
<dbReference type="Proteomes" id="UP000694720">
    <property type="component" value="Unplaced"/>
</dbReference>
<dbReference type="Proteomes" id="UP000694722">
    <property type="component" value="Unplaced"/>
</dbReference>
<dbReference type="Proteomes" id="UP000694723">
    <property type="component" value="Unplaced"/>
</dbReference>
<dbReference type="Proteomes" id="UP000694724">
    <property type="component" value="Unplaced"/>
</dbReference>
<dbReference type="Proteomes" id="UP000694725">
    <property type="component" value="Unplaced"/>
</dbReference>
<dbReference type="Proteomes" id="UP000694726">
    <property type="component" value="Unplaced"/>
</dbReference>
<dbReference type="Proteomes" id="UP000694727">
    <property type="component" value="Unplaced"/>
</dbReference>
<dbReference type="Proteomes" id="UP000694728">
    <property type="component" value="Unplaced"/>
</dbReference>
<dbReference type="GO" id="GO:0005737">
    <property type="term" value="C:cytoplasm"/>
    <property type="evidence" value="ECO:0000250"/>
    <property type="project" value="UniProtKB"/>
</dbReference>
<dbReference type="GO" id="GO:0031410">
    <property type="term" value="C:cytoplasmic vesicle"/>
    <property type="evidence" value="ECO:0000250"/>
    <property type="project" value="UniProtKB"/>
</dbReference>
<dbReference type="GO" id="GO:0005829">
    <property type="term" value="C:cytosol"/>
    <property type="evidence" value="ECO:0000250"/>
    <property type="project" value="UniProtKB"/>
</dbReference>
<dbReference type="GO" id="GO:0032839">
    <property type="term" value="C:dendrite cytoplasm"/>
    <property type="evidence" value="ECO:0000250"/>
    <property type="project" value="UniProtKB"/>
</dbReference>
<dbReference type="GO" id="GO:0005615">
    <property type="term" value="C:extracellular space"/>
    <property type="evidence" value="ECO:0000250"/>
    <property type="project" value="UniProtKB"/>
</dbReference>
<dbReference type="GO" id="GO:0005739">
    <property type="term" value="C:mitochondrion"/>
    <property type="evidence" value="ECO:0000250"/>
    <property type="project" value="UniProtKB"/>
</dbReference>
<dbReference type="GO" id="GO:0043025">
    <property type="term" value="C:neuronal cell body"/>
    <property type="evidence" value="ECO:0000250"/>
    <property type="project" value="UniProtKB"/>
</dbReference>
<dbReference type="GO" id="GO:0005634">
    <property type="term" value="C:nucleus"/>
    <property type="evidence" value="ECO:0000250"/>
    <property type="project" value="UniProtKB"/>
</dbReference>
<dbReference type="GO" id="GO:0005777">
    <property type="term" value="C:peroxisome"/>
    <property type="evidence" value="ECO:0000318"/>
    <property type="project" value="GO_Central"/>
</dbReference>
<dbReference type="GO" id="GO:0032991">
    <property type="term" value="C:protein-containing complex"/>
    <property type="evidence" value="ECO:0000250"/>
    <property type="project" value="UniProtKB"/>
</dbReference>
<dbReference type="GO" id="GO:0005507">
    <property type="term" value="F:copper ion binding"/>
    <property type="evidence" value="ECO:0000250"/>
    <property type="project" value="UniProtKB"/>
</dbReference>
<dbReference type="GO" id="GO:0030346">
    <property type="term" value="F:protein phosphatase 2B binding"/>
    <property type="evidence" value="ECO:0000250"/>
    <property type="project" value="UniProtKB"/>
</dbReference>
<dbReference type="GO" id="GO:0051087">
    <property type="term" value="F:protein-folding chaperone binding"/>
    <property type="evidence" value="ECO:0000250"/>
    <property type="project" value="UniProtKB"/>
</dbReference>
<dbReference type="GO" id="GO:0004784">
    <property type="term" value="F:superoxide dismutase activity"/>
    <property type="evidence" value="ECO:0000250"/>
    <property type="project" value="UniProtKB"/>
</dbReference>
<dbReference type="GO" id="GO:0008270">
    <property type="term" value="F:zinc ion binding"/>
    <property type="evidence" value="ECO:0000250"/>
    <property type="project" value="UniProtKB"/>
</dbReference>
<dbReference type="GO" id="GO:0060088">
    <property type="term" value="P:auditory receptor cell stereocilium organization"/>
    <property type="evidence" value="ECO:0000250"/>
    <property type="project" value="UniProtKB"/>
</dbReference>
<dbReference type="GO" id="GO:0007566">
    <property type="term" value="P:embryo implantation"/>
    <property type="evidence" value="ECO:0000250"/>
    <property type="project" value="UniProtKB"/>
</dbReference>
<dbReference type="GO" id="GO:0006749">
    <property type="term" value="P:glutathione metabolic process"/>
    <property type="evidence" value="ECO:0000250"/>
    <property type="project" value="UniProtKB"/>
</dbReference>
<dbReference type="GO" id="GO:0060047">
    <property type="term" value="P:heart contraction"/>
    <property type="evidence" value="ECO:0000250"/>
    <property type="project" value="UniProtKB"/>
</dbReference>
<dbReference type="GO" id="GO:0050665">
    <property type="term" value="P:hydrogen peroxide biosynthetic process"/>
    <property type="evidence" value="ECO:0000250"/>
    <property type="project" value="UniProtKB"/>
</dbReference>
<dbReference type="GO" id="GO:0006879">
    <property type="term" value="P:intracellular iron ion homeostasis"/>
    <property type="evidence" value="ECO:0000250"/>
    <property type="project" value="UniProtKB"/>
</dbReference>
<dbReference type="GO" id="GO:0007626">
    <property type="term" value="P:locomotory behavior"/>
    <property type="evidence" value="ECO:0000250"/>
    <property type="project" value="UniProtKB"/>
</dbReference>
<dbReference type="GO" id="GO:0046716">
    <property type="term" value="P:muscle cell cellular homeostasis"/>
    <property type="evidence" value="ECO:0000250"/>
    <property type="project" value="UniProtKB"/>
</dbReference>
<dbReference type="GO" id="GO:0002262">
    <property type="term" value="P:myeloid cell homeostasis"/>
    <property type="evidence" value="ECO:0000250"/>
    <property type="project" value="UniProtKB"/>
</dbReference>
<dbReference type="GO" id="GO:0043524">
    <property type="term" value="P:negative regulation of neuron apoptotic process"/>
    <property type="evidence" value="ECO:0000250"/>
    <property type="project" value="UniProtKB"/>
</dbReference>
<dbReference type="GO" id="GO:0060052">
    <property type="term" value="P:neurofilament cytoskeleton organization"/>
    <property type="evidence" value="ECO:0000250"/>
    <property type="project" value="UniProtKB"/>
</dbReference>
<dbReference type="GO" id="GO:0001541">
    <property type="term" value="P:ovarian follicle development"/>
    <property type="evidence" value="ECO:0000250"/>
    <property type="project" value="UniProtKB"/>
</dbReference>
<dbReference type="GO" id="GO:0032287">
    <property type="term" value="P:peripheral nervous system myelin maintenance"/>
    <property type="evidence" value="ECO:0000250"/>
    <property type="project" value="UniProtKB"/>
</dbReference>
<dbReference type="GO" id="GO:0001819">
    <property type="term" value="P:positive regulation of cytokine production"/>
    <property type="evidence" value="ECO:0000250"/>
    <property type="project" value="UniProtKB"/>
</dbReference>
<dbReference type="GO" id="GO:0043410">
    <property type="term" value="P:positive regulation of MAPK cascade"/>
    <property type="evidence" value="ECO:0000250"/>
    <property type="project" value="UniProtKB"/>
</dbReference>
<dbReference type="GO" id="GO:0072593">
    <property type="term" value="P:reactive oxygen species metabolic process"/>
    <property type="evidence" value="ECO:0000250"/>
    <property type="project" value="UniProtKB"/>
</dbReference>
<dbReference type="GO" id="GO:0008217">
    <property type="term" value="P:regulation of blood pressure"/>
    <property type="evidence" value="ECO:0000250"/>
    <property type="project" value="UniProtKB"/>
</dbReference>
<dbReference type="GO" id="GO:0051881">
    <property type="term" value="P:regulation of mitochondrial membrane potential"/>
    <property type="evidence" value="ECO:0000250"/>
    <property type="project" value="UniProtKB"/>
</dbReference>
<dbReference type="GO" id="GO:0040014">
    <property type="term" value="P:regulation of multicellular organism growth"/>
    <property type="evidence" value="ECO:0000250"/>
    <property type="project" value="UniProtKB"/>
</dbReference>
<dbReference type="GO" id="GO:0060087">
    <property type="term" value="P:relaxation of vascular associated smooth muscle"/>
    <property type="evidence" value="ECO:0000250"/>
    <property type="project" value="UniProtKB"/>
</dbReference>
<dbReference type="GO" id="GO:0019430">
    <property type="term" value="P:removal of superoxide radicals"/>
    <property type="evidence" value="ECO:0000250"/>
    <property type="project" value="UniProtKB"/>
</dbReference>
<dbReference type="GO" id="GO:0048678">
    <property type="term" value="P:response to axon injury"/>
    <property type="evidence" value="ECO:0000250"/>
    <property type="project" value="UniProtKB"/>
</dbReference>
<dbReference type="GO" id="GO:0045471">
    <property type="term" value="P:response to ethanol"/>
    <property type="evidence" value="ECO:0000250"/>
    <property type="project" value="UniProtKB"/>
</dbReference>
<dbReference type="GO" id="GO:0009408">
    <property type="term" value="P:response to heat"/>
    <property type="evidence" value="ECO:0000250"/>
    <property type="project" value="UniProtKB"/>
</dbReference>
<dbReference type="GO" id="GO:0042542">
    <property type="term" value="P:response to hydrogen peroxide"/>
    <property type="evidence" value="ECO:0000250"/>
    <property type="project" value="UniProtKB"/>
</dbReference>
<dbReference type="GO" id="GO:0000303">
    <property type="term" value="P:response to superoxide"/>
    <property type="evidence" value="ECO:0000250"/>
    <property type="project" value="UniProtKB"/>
</dbReference>
<dbReference type="GO" id="GO:0001895">
    <property type="term" value="P:retina homeostasis"/>
    <property type="evidence" value="ECO:0000250"/>
    <property type="project" value="UniProtKB"/>
</dbReference>
<dbReference type="GO" id="GO:0007605">
    <property type="term" value="P:sensory perception of sound"/>
    <property type="evidence" value="ECO:0000250"/>
    <property type="project" value="UniProtKB"/>
</dbReference>
<dbReference type="GO" id="GO:0007283">
    <property type="term" value="P:spermatogenesis"/>
    <property type="evidence" value="ECO:0000250"/>
    <property type="project" value="UniProtKB"/>
</dbReference>
<dbReference type="GO" id="GO:0006801">
    <property type="term" value="P:superoxide metabolic process"/>
    <property type="evidence" value="ECO:0000250"/>
    <property type="project" value="UniProtKB"/>
</dbReference>
<dbReference type="GO" id="GO:0019226">
    <property type="term" value="P:transmission of nerve impulse"/>
    <property type="evidence" value="ECO:0000250"/>
    <property type="project" value="UniProtKB"/>
</dbReference>
<dbReference type="CDD" id="cd00305">
    <property type="entry name" value="Cu-Zn_Superoxide_Dismutase"/>
    <property type="match status" value="1"/>
</dbReference>
<dbReference type="FunFam" id="2.60.40.200:FF:000001">
    <property type="entry name" value="Superoxide dismutase [Cu-Zn]"/>
    <property type="match status" value="1"/>
</dbReference>
<dbReference type="Gene3D" id="2.60.40.200">
    <property type="entry name" value="Superoxide dismutase, copper/zinc binding domain"/>
    <property type="match status" value="1"/>
</dbReference>
<dbReference type="InterPro" id="IPR036423">
    <property type="entry name" value="SOD-like_Cu/Zn_dom_sf"/>
</dbReference>
<dbReference type="InterPro" id="IPR024134">
    <property type="entry name" value="SOD_Cu/Zn_/chaperone"/>
</dbReference>
<dbReference type="InterPro" id="IPR018152">
    <property type="entry name" value="SOD_Cu/Zn_BS"/>
</dbReference>
<dbReference type="InterPro" id="IPR001424">
    <property type="entry name" value="SOD_Cu_Zn_dom"/>
</dbReference>
<dbReference type="PANTHER" id="PTHR10003">
    <property type="entry name" value="SUPEROXIDE DISMUTASE CU-ZN -RELATED"/>
    <property type="match status" value="1"/>
</dbReference>
<dbReference type="Pfam" id="PF00080">
    <property type="entry name" value="Sod_Cu"/>
    <property type="match status" value="1"/>
</dbReference>
<dbReference type="PRINTS" id="PR00068">
    <property type="entry name" value="CUZNDISMTASE"/>
</dbReference>
<dbReference type="SUPFAM" id="SSF49329">
    <property type="entry name" value="Cu,Zn superoxide dismutase-like"/>
    <property type="match status" value="1"/>
</dbReference>
<dbReference type="PROSITE" id="PS00087">
    <property type="entry name" value="SOD_CU_ZN_1"/>
    <property type="match status" value="1"/>
</dbReference>
<dbReference type="PROSITE" id="PS00332">
    <property type="entry name" value="SOD_CU_ZN_2"/>
    <property type="match status" value="1"/>
</dbReference>
<organism>
    <name type="scientific">Sus scrofa</name>
    <name type="common">Pig</name>
    <dbReference type="NCBI Taxonomy" id="9823"/>
    <lineage>
        <taxon>Eukaryota</taxon>
        <taxon>Metazoa</taxon>
        <taxon>Chordata</taxon>
        <taxon>Craniata</taxon>
        <taxon>Vertebrata</taxon>
        <taxon>Euteleostomi</taxon>
        <taxon>Mammalia</taxon>
        <taxon>Eutheria</taxon>
        <taxon>Laurasiatheria</taxon>
        <taxon>Artiodactyla</taxon>
        <taxon>Suina</taxon>
        <taxon>Suidae</taxon>
        <taxon>Sus</taxon>
    </lineage>
</organism>
<feature type="initiator methionine" description="Removed" evidence="5">
    <location>
        <position position="1"/>
    </location>
</feature>
<feature type="chain" id="PRO_0000164064" description="Superoxide dismutase [Cu-Zn]">
    <location>
        <begin position="2"/>
        <end position="153"/>
    </location>
</feature>
<feature type="region of interest" description="Disordered" evidence="4">
    <location>
        <begin position="56"/>
        <end position="80"/>
    </location>
</feature>
<feature type="compositionally biased region" description="Basic and acidic residues" evidence="4">
    <location>
        <begin position="66"/>
        <end position="80"/>
    </location>
</feature>
<feature type="binding site" evidence="1">
    <location>
        <position position="46"/>
    </location>
    <ligand>
        <name>Cu cation</name>
        <dbReference type="ChEBI" id="CHEBI:23378"/>
        <note>catalytic</note>
    </ligand>
</feature>
<feature type="binding site" evidence="1">
    <location>
        <position position="48"/>
    </location>
    <ligand>
        <name>Cu cation</name>
        <dbReference type="ChEBI" id="CHEBI:23378"/>
        <note>catalytic</note>
    </ligand>
</feature>
<feature type="binding site" evidence="1">
    <location>
        <position position="63"/>
    </location>
    <ligand>
        <name>Cu cation</name>
        <dbReference type="ChEBI" id="CHEBI:23378"/>
        <note>catalytic</note>
    </ligand>
</feature>
<feature type="binding site" evidence="1">
    <location>
        <position position="63"/>
    </location>
    <ligand>
        <name>Zn(2+)</name>
        <dbReference type="ChEBI" id="CHEBI:29105"/>
        <note>structural</note>
    </ligand>
</feature>
<feature type="binding site" evidence="1">
    <location>
        <position position="71"/>
    </location>
    <ligand>
        <name>Zn(2+)</name>
        <dbReference type="ChEBI" id="CHEBI:29105"/>
        <note>structural</note>
    </ligand>
</feature>
<feature type="binding site" evidence="1">
    <location>
        <position position="80"/>
    </location>
    <ligand>
        <name>Zn(2+)</name>
        <dbReference type="ChEBI" id="CHEBI:29105"/>
        <note>structural</note>
    </ligand>
</feature>
<feature type="binding site" evidence="1">
    <location>
        <position position="83"/>
    </location>
    <ligand>
        <name>Zn(2+)</name>
        <dbReference type="ChEBI" id="CHEBI:29105"/>
        <note>structural</note>
    </ligand>
</feature>
<feature type="binding site" evidence="1">
    <location>
        <position position="120"/>
    </location>
    <ligand>
        <name>Cu cation</name>
        <dbReference type="ChEBI" id="CHEBI:23378"/>
        <note>catalytic</note>
    </ligand>
</feature>
<feature type="modified residue" description="N-acetylalanine" evidence="5">
    <location>
        <position position="2"/>
    </location>
</feature>
<feature type="modified residue" description="N6-succinyllysine" evidence="3">
    <location>
        <position position="4"/>
    </location>
</feature>
<feature type="modified residue" description="N6-succinyllysine" evidence="3">
    <location>
        <position position="10"/>
    </location>
</feature>
<feature type="modified residue" description="N6-succinyllysine" evidence="3">
    <location>
        <position position="91"/>
    </location>
</feature>
<feature type="modified residue" description="Phosphoserine" evidence="2">
    <location>
        <position position="102"/>
    </location>
</feature>
<feature type="modified residue" description="Phosphoserine" evidence="3">
    <location>
        <position position="107"/>
    </location>
</feature>
<feature type="modified residue" description="N6-acetyllysine; alternate" evidence="2">
    <location>
        <position position="122"/>
    </location>
</feature>
<feature type="modified residue" description="N6-succinyllysine; alternate" evidence="2">
    <location>
        <position position="122"/>
    </location>
</feature>
<feature type="modified residue" description="N6-acetyllysine; alternate" evidence="3">
    <location>
        <position position="136"/>
    </location>
</feature>
<feature type="modified residue" description="N6-succinyllysine; alternate" evidence="3">
    <location>
        <position position="136"/>
    </location>
</feature>
<feature type="lipid moiety-binding region" description="S-palmitoyl cysteine" evidence="1">
    <location>
        <position position="7"/>
    </location>
</feature>
<feature type="disulfide bond">
    <location>
        <begin position="57"/>
        <end position="146"/>
    </location>
</feature>
<accession>P04178</accession>
<keyword id="KW-0007">Acetylation</keyword>
<keyword id="KW-0049">Antioxidant</keyword>
<keyword id="KW-0186">Copper</keyword>
<keyword id="KW-0963">Cytoplasm</keyword>
<keyword id="KW-0903">Direct protein sequencing</keyword>
<keyword id="KW-1015">Disulfide bond</keyword>
<keyword id="KW-0449">Lipoprotein</keyword>
<keyword id="KW-0479">Metal-binding</keyword>
<keyword id="KW-0539">Nucleus</keyword>
<keyword id="KW-0560">Oxidoreductase</keyword>
<keyword id="KW-0564">Palmitate</keyword>
<keyword id="KW-0597">Phosphoprotein</keyword>
<keyword id="KW-1185">Reference proteome</keyword>
<keyword id="KW-0862">Zinc</keyword>
<name>SODC_PIG</name>
<comment type="function">
    <text>Destroys radicals which are normally produced within the cells and which are toxic to biological systems.</text>
</comment>
<comment type="catalytic activity">
    <reaction>
        <text>2 superoxide + 2 H(+) = H2O2 + O2</text>
        <dbReference type="Rhea" id="RHEA:20696"/>
        <dbReference type="ChEBI" id="CHEBI:15378"/>
        <dbReference type="ChEBI" id="CHEBI:15379"/>
        <dbReference type="ChEBI" id="CHEBI:16240"/>
        <dbReference type="ChEBI" id="CHEBI:18421"/>
        <dbReference type="EC" id="1.15.1.1"/>
    </reaction>
</comment>
<comment type="cofactor">
    <cofactor evidence="1">
        <name>Cu cation</name>
        <dbReference type="ChEBI" id="CHEBI:23378"/>
    </cofactor>
    <text evidence="1">Binds 1 copper ion per subunit.</text>
</comment>
<comment type="cofactor">
    <cofactor evidence="1">
        <name>Zn(2+)</name>
        <dbReference type="ChEBI" id="CHEBI:29105"/>
    </cofactor>
    <text evidence="1">Binds 1 zinc ion per subunit.</text>
</comment>
<comment type="subunit">
    <text evidence="2 3">Homodimer; non-disulfide-linked (By similarity). Heterodimer with SOD1. The heterodimer CCS:SOD1 interacts with SLC31A1; this heterotrimer is Cu(1+)-mediated and its maintenance is regulated through SOD1 activation (By similarity).</text>
</comment>
<comment type="subcellular location">
    <subcellularLocation>
        <location>Cytoplasm</location>
    </subcellularLocation>
    <subcellularLocation>
        <location evidence="1">Nucleus</location>
    </subcellularLocation>
</comment>
<comment type="PTM">
    <text evidence="1">Palmitoylation helps nuclear targeting and decreases catalytic activity.</text>
</comment>
<comment type="PTM">
    <text evidence="2">Succinylation, adjacent to copper catalytic site, probably inhibits activity. Desuccinylation by SIRT5 enhances activity.</text>
</comment>
<comment type="similarity">
    <text evidence="6">Belongs to the Cu-Zn superoxide dismutase family.</text>
</comment>
<proteinExistence type="evidence at protein level"/>